<protein>
    <recommendedName>
        <fullName evidence="2">Purine nucleoside phosphorylase DeoD-type</fullName>
        <shortName evidence="2">PNP</shortName>
        <ecNumber evidence="2">2.4.2.1</ecNumber>
    </recommendedName>
</protein>
<gene>
    <name evidence="2" type="primary">deoD</name>
    <name type="ordered locus">PMI2413</name>
</gene>
<feature type="chain" id="PRO_1000186212" description="Purine nucleoside phosphorylase DeoD-type">
    <location>
        <begin position="1"/>
        <end position="238"/>
    </location>
</feature>
<feature type="active site" description="Proton donor" evidence="2">
    <location>
        <position position="205"/>
    </location>
</feature>
<feature type="binding site" evidence="1">
    <location>
        <position position="5"/>
    </location>
    <ligand>
        <name>a purine D-ribonucleoside</name>
        <dbReference type="ChEBI" id="CHEBI:142355"/>
        <note>ligand shared between dimeric partners</note>
    </ligand>
</feature>
<feature type="binding site" description="in other chain" evidence="1">
    <location>
        <position position="21"/>
    </location>
    <ligand>
        <name>phosphate</name>
        <dbReference type="ChEBI" id="CHEBI:43474"/>
        <note>ligand shared between dimeric partners</note>
    </ligand>
</feature>
<feature type="binding site" description="in other chain" evidence="1">
    <location>
        <position position="25"/>
    </location>
    <ligand>
        <name>phosphate</name>
        <dbReference type="ChEBI" id="CHEBI:43474"/>
        <note>ligand shared between dimeric partners</note>
    </ligand>
</feature>
<feature type="binding site" evidence="1">
    <location>
        <position position="44"/>
    </location>
    <ligand>
        <name>phosphate</name>
        <dbReference type="ChEBI" id="CHEBI:43474"/>
        <note>ligand shared between dimeric partners</note>
    </ligand>
</feature>
<feature type="binding site" description="in other chain" evidence="1">
    <location>
        <begin position="88"/>
        <end position="91"/>
    </location>
    <ligand>
        <name>phosphate</name>
        <dbReference type="ChEBI" id="CHEBI:43474"/>
        <note>ligand shared between dimeric partners</note>
    </ligand>
</feature>
<feature type="binding site" description="in other chain" evidence="1">
    <location>
        <begin position="180"/>
        <end position="182"/>
    </location>
    <ligand>
        <name>a purine D-ribonucleoside</name>
        <dbReference type="ChEBI" id="CHEBI:142355"/>
        <note>ligand shared between dimeric partners</note>
    </ligand>
</feature>
<feature type="binding site" description="in other chain" evidence="1">
    <location>
        <begin position="204"/>
        <end position="205"/>
    </location>
    <ligand>
        <name>a purine D-ribonucleoside</name>
        <dbReference type="ChEBI" id="CHEBI:142355"/>
        <note>ligand shared between dimeric partners</note>
    </ligand>
</feature>
<feature type="site" description="Important for catalytic activity" evidence="2">
    <location>
        <position position="218"/>
    </location>
</feature>
<reference key="1">
    <citation type="journal article" date="2008" name="J. Bacteriol.">
        <title>Complete genome sequence of uropathogenic Proteus mirabilis, a master of both adherence and motility.</title>
        <authorList>
            <person name="Pearson M.M."/>
            <person name="Sebaihia M."/>
            <person name="Churcher C."/>
            <person name="Quail M.A."/>
            <person name="Seshasayee A.S."/>
            <person name="Luscombe N.M."/>
            <person name="Abdellah Z."/>
            <person name="Arrosmith C."/>
            <person name="Atkin B."/>
            <person name="Chillingworth T."/>
            <person name="Hauser H."/>
            <person name="Jagels K."/>
            <person name="Moule S."/>
            <person name="Mungall K."/>
            <person name="Norbertczak H."/>
            <person name="Rabbinowitsch E."/>
            <person name="Walker D."/>
            <person name="Whithead S."/>
            <person name="Thomson N.R."/>
            <person name="Rather P.N."/>
            <person name="Parkhill J."/>
            <person name="Mobley H.L.T."/>
        </authorList>
    </citation>
    <scope>NUCLEOTIDE SEQUENCE [LARGE SCALE GENOMIC DNA]</scope>
    <source>
        <strain>HI4320</strain>
    </source>
</reference>
<proteinExistence type="inferred from homology"/>
<keyword id="KW-0328">Glycosyltransferase</keyword>
<keyword id="KW-1185">Reference proteome</keyword>
<keyword id="KW-0808">Transferase</keyword>
<evidence type="ECO:0000250" key="1">
    <source>
        <dbReference type="UniProtKB" id="P50389"/>
    </source>
</evidence>
<evidence type="ECO:0000255" key="2">
    <source>
        <dbReference type="HAMAP-Rule" id="MF_01627"/>
    </source>
</evidence>
<name>DEOD_PROMH</name>
<organism>
    <name type="scientific">Proteus mirabilis (strain HI4320)</name>
    <dbReference type="NCBI Taxonomy" id="529507"/>
    <lineage>
        <taxon>Bacteria</taxon>
        <taxon>Pseudomonadati</taxon>
        <taxon>Pseudomonadota</taxon>
        <taxon>Gammaproteobacteria</taxon>
        <taxon>Enterobacterales</taxon>
        <taxon>Morganellaceae</taxon>
        <taxon>Proteus</taxon>
    </lineage>
</organism>
<sequence>MATPHINAEMGDFADVVLMPGDPLRAKYIAETFLQDVRQVNNVRGMLGFTGTYKGRKISVMGHGMGIPSCSIYAKELITDFGVKVIIRVGSCGAVLPDVELRDVVIGMGACTDSKVNRLRFKDQDFAAIADFELVQNAVSAAKAKDIKVRVGNIFSADLFYSPDPEMFDVMEKYGILGVEMEAAGIYGVAAEYGARALTICTVSDHIKKGTQTTSEERQTTFNEMIEIALESVLLLED</sequence>
<accession>B4EWA1</accession>
<comment type="function">
    <text evidence="2">Catalyzes the reversible phosphorolytic breakdown of the N-glycosidic bond in the beta-(deoxy)ribonucleoside molecules, with the formation of the corresponding free purine bases and pentose-1-phosphate.</text>
</comment>
<comment type="catalytic activity">
    <reaction evidence="2">
        <text>a purine D-ribonucleoside + phosphate = a purine nucleobase + alpha-D-ribose 1-phosphate</text>
        <dbReference type="Rhea" id="RHEA:19805"/>
        <dbReference type="ChEBI" id="CHEBI:26386"/>
        <dbReference type="ChEBI" id="CHEBI:43474"/>
        <dbReference type="ChEBI" id="CHEBI:57720"/>
        <dbReference type="ChEBI" id="CHEBI:142355"/>
        <dbReference type="EC" id="2.4.2.1"/>
    </reaction>
</comment>
<comment type="catalytic activity">
    <reaction evidence="2">
        <text>a purine 2'-deoxy-D-ribonucleoside + phosphate = a purine nucleobase + 2-deoxy-alpha-D-ribose 1-phosphate</text>
        <dbReference type="Rhea" id="RHEA:36431"/>
        <dbReference type="ChEBI" id="CHEBI:26386"/>
        <dbReference type="ChEBI" id="CHEBI:43474"/>
        <dbReference type="ChEBI" id="CHEBI:57259"/>
        <dbReference type="ChEBI" id="CHEBI:142361"/>
        <dbReference type="EC" id="2.4.2.1"/>
    </reaction>
</comment>
<comment type="subunit">
    <text evidence="2">Homohexamer; trimer of homodimers.</text>
</comment>
<comment type="similarity">
    <text evidence="2">Belongs to the PNP/UDP phosphorylase family.</text>
</comment>
<dbReference type="EC" id="2.4.2.1" evidence="2"/>
<dbReference type="EMBL" id="AM942759">
    <property type="protein sequence ID" value="CAR44770.1"/>
    <property type="molecule type" value="Genomic_DNA"/>
</dbReference>
<dbReference type="RefSeq" id="WP_004249423.1">
    <property type="nucleotide sequence ID" value="NC_010554.1"/>
</dbReference>
<dbReference type="SMR" id="B4EWA1"/>
<dbReference type="EnsemblBacteria" id="CAR44770">
    <property type="protein sequence ID" value="CAR44770"/>
    <property type="gene ID" value="PMI2413"/>
</dbReference>
<dbReference type="GeneID" id="6801110"/>
<dbReference type="KEGG" id="pmr:PMI2413"/>
<dbReference type="eggNOG" id="COG0813">
    <property type="taxonomic scope" value="Bacteria"/>
</dbReference>
<dbReference type="HOGENOM" id="CLU_068457_2_0_6"/>
<dbReference type="Proteomes" id="UP000008319">
    <property type="component" value="Chromosome"/>
</dbReference>
<dbReference type="GO" id="GO:0005829">
    <property type="term" value="C:cytosol"/>
    <property type="evidence" value="ECO:0007669"/>
    <property type="project" value="TreeGrafter"/>
</dbReference>
<dbReference type="GO" id="GO:0004731">
    <property type="term" value="F:purine-nucleoside phosphorylase activity"/>
    <property type="evidence" value="ECO:0007669"/>
    <property type="project" value="UniProtKB-UniRule"/>
</dbReference>
<dbReference type="GO" id="GO:0006152">
    <property type="term" value="P:purine nucleoside catabolic process"/>
    <property type="evidence" value="ECO:0007669"/>
    <property type="project" value="TreeGrafter"/>
</dbReference>
<dbReference type="CDD" id="cd09006">
    <property type="entry name" value="PNP_EcPNPI-like"/>
    <property type="match status" value="1"/>
</dbReference>
<dbReference type="FunFam" id="3.40.50.1580:FF:000002">
    <property type="entry name" value="Purine nucleoside phosphorylase DeoD-type"/>
    <property type="match status" value="1"/>
</dbReference>
<dbReference type="Gene3D" id="3.40.50.1580">
    <property type="entry name" value="Nucleoside phosphorylase domain"/>
    <property type="match status" value="1"/>
</dbReference>
<dbReference type="HAMAP" id="MF_01627">
    <property type="entry name" value="Pur_nucleosid_phosp"/>
    <property type="match status" value="1"/>
</dbReference>
<dbReference type="InterPro" id="IPR004402">
    <property type="entry name" value="DeoD-type"/>
</dbReference>
<dbReference type="InterPro" id="IPR018016">
    <property type="entry name" value="Nucleoside_phosphorylase_CS"/>
</dbReference>
<dbReference type="InterPro" id="IPR000845">
    <property type="entry name" value="Nucleoside_phosphorylase_d"/>
</dbReference>
<dbReference type="InterPro" id="IPR035994">
    <property type="entry name" value="Nucleoside_phosphorylase_sf"/>
</dbReference>
<dbReference type="NCBIfam" id="TIGR00107">
    <property type="entry name" value="deoD"/>
    <property type="match status" value="1"/>
</dbReference>
<dbReference type="NCBIfam" id="NF004489">
    <property type="entry name" value="PRK05819.1"/>
    <property type="match status" value="1"/>
</dbReference>
<dbReference type="NCBIfam" id="NF009914">
    <property type="entry name" value="PRK13374.1"/>
    <property type="match status" value="1"/>
</dbReference>
<dbReference type="PANTHER" id="PTHR43691:SF2">
    <property type="entry name" value="PURINE NUCLEOSIDE PHOSPHORYLASE DEOD-TYPE"/>
    <property type="match status" value="1"/>
</dbReference>
<dbReference type="PANTHER" id="PTHR43691">
    <property type="entry name" value="URIDINE PHOSPHORYLASE"/>
    <property type="match status" value="1"/>
</dbReference>
<dbReference type="Pfam" id="PF01048">
    <property type="entry name" value="PNP_UDP_1"/>
    <property type="match status" value="1"/>
</dbReference>
<dbReference type="SUPFAM" id="SSF53167">
    <property type="entry name" value="Purine and uridine phosphorylases"/>
    <property type="match status" value="1"/>
</dbReference>
<dbReference type="PROSITE" id="PS01232">
    <property type="entry name" value="PNP_UDP_1"/>
    <property type="match status" value="1"/>
</dbReference>